<proteinExistence type="inferred from homology"/>
<dbReference type="EC" id="3.1.1.96" evidence="1"/>
<dbReference type="EMBL" id="AM286690">
    <property type="protein sequence ID" value="CAL17704.1"/>
    <property type="molecule type" value="Genomic_DNA"/>
</dbReference>
<dbReference type="SMR" id="Q0VM94"/>
<dbReference type="STRING" id="393595.ABO_2256"/>
<dbReference type="KEGG" id="abo:ABO_2256"/>
<dbReference type="eggNOG" id="COG1490">
    <property type="taxonomic scope" value="Bacteria"/>
</dbReference>
<dbReference type="HOGENOM" id="CLU_076901_1_0_6"/>
<dbReference type="OrthoDB" id="9801395at2"/>
<dbReference type="Proteomes" id="UP000008871">
    <property type="component" value="Chromosome"/>
</dbReference>
<dbReference type="GO" id="GO:0005737">
    <property type="term" value="C:cytoplasm"/>
    <property type="evidence" value="ECO:0007669"/>
    <property type="project" value="UniProtKB-SubCell"/>
</dbReference>
<dbReference type="GO" id="GO:0051500">
    <property type="term" value="F:D-tyrosyl-tRNA(Tyr) deacylase activity"/>
    <property type="evidence" value="ECO:0007669"/>
    <property type="project" value="TreeGrafter"/>
</dbReference>
<dbReference type="GO" id="GO:0106026">
    <property type="term" value="F:Gly-tRNA(Ala) deacylase activity"/>
    <property type="evidence" value="ECO:0007669"/>
    <property type="project" value="UniProtKB-UniRule"/>
</dbReference>
<dbReference type="GO" id="GO:0043908">
    <property type="term" value="F:Ser(Gly)-tRNA(Ala) hydrolase activity"/>
    <property type="evidence" value="ECO:0007669"/>
    <property type="project" value="UniProtKB-UniRule"/>
</dbReference>
<dbReference type="GO" id="GO:0000049">
    <property type="term" value="F:tRNA binding"/>
    <property type="evidence" value="ECO:0007669"/>
    <property type="project" value="UniProtKB-UniRule"/>
</dbReference>
<dbReference type="GO" id="GO:0019478">
    <property type="term" value="P:D-amino acid catabolic process"/>
    <property type="evidence" value="ECO:0007669"/>
    <property type="project" value="UniProtKB-UniRule"/>
</dbReference>
<dbReference type="FunFam" id="3.50.80.10:FF:000001">
    <property type="entry name" value="D-aminoacyl-tRNA deacylase"/>
    <property type="match status" value="1"/>
</dbReference>
<dbReference type="Gene3D" id="3.50.80.10">
    <property type="entry name" value="D-tyrosyl-tRNA(Tyr) deacylase"/>
    <property type="match status" value="1"/>
</dbReference>
<dbReference type="HAMAP" id="MF_00518">
    <property type="entry name" value="Deacylase_Dtd"/>
    <property type="match status" value="1"/>
</dbReference>
<dbReference type="InterPro" id="IPR003732">
    <property type="entry name" value="Daa-tRNA_deacyls_DTD"/>
</dbReference>
<dbReference type="InterPro" id="IPR023509">
    <property type="entry name" value="DTD-like_sf"/>
</dbReference>
<dbReference type="NCBIfam" id="TIGR00256">
    <property type="entry name" value="D-aminoacyl-tRNA deacylase"/>
    <property type="match status" value="1"/>
</dbReference>
<dbReference type="PANTHER" id="PTHR10472:SF5">
    <property type="entry name" value="D-AMINOACYL-TRNA DEACYLASE 1"/>
    <property type="match status" value="1"/>
</dbReference>
<dbReference type="PANTHER" id="PTHR10472">
    <property type="entry name" value="D-TYROSYL-TRNA TYR DEACYLASE"/>
    <property type="match status" value="1"/>
</dbReference>
<dbReference type="Pfam" id="PF02580">
    <property type="entry name" value="Tyr_Deacylase"/>
    <property type="match status" value="1"/>
</dbReference>
<dbReference type="SUPFAM" id="SSF69500">
    <property type="entry name" value="DTD-like"/>
    <property type="match status" value="1"/>
</dbReference>
<sequence>MKVLMQRVSEAHVDVSGRTVGAIDNGLLLFIGIEKHDDTALVDRMVERIIGYRVFADERGKMNWDVRDAGGALLAISQFTLVADTRKGRRPSFSSAADPVLARPLYEHCVAQLKAHGLPVATGVFAAEMQVSLVNDGPVTFMLEM</sequence>
<evidence type="ECO:0000255" key="1">
    <source>
        <dbReference type="HAMAP-Rule" id="MF_00518"/>
    </source>
</evidence>
<protein>
    <recommendedName>
        <fullName evidence="1">D-aminoacyl-tRNA deacylase</fullName>
        <shortName evidence="1">DTD</shortName>
        <ecNumber evidence="1">3.1.1.96</ecNumber>
    </recommendedName>
    <alternativeName>
        <fullName evidence="1">Gly-tRNA(Ala) deacylase</fullName>
    </alternativeName>
</protein>
<organism>
    <name type="scientific">Alcanivorax borkumensis (strain ATCC 700651 / DSM 11573 / NCIMB 13689 / SK2)</name>
    <dbReference type="NCBI Taxonomy" id="393595"/>
    <lineage>
        <taxon>Bacteria</taxon>
        <taxon>Pseudomonadati</taxon>
        <taxon>Pseudomonadota</taxon>
        <taxon>Gammaproteobacteria</taxon>
        <taxon>Oceanospirillales</taxon>
        <taxon>Alcanivoracaceae</taxon>
        <taxon>Alcanivorax</taxon>
    </lineage>
</organism>
<name>DTD_ALCBS</name>
<gene>
    <name evidence="1" type="primary">dtd</name>
    <name type="ordered locus">ABO_2256</name>
</gene>
<comment type="function">
    <text evidence="1">An aminoacyl-tRNA editing enzyme that deacylates mischarged D-aminoacyl-tRNAs. Also deacylates mischarged glycyl-tRNA(Ala), protecting cells against glycine mischarging by AlaRS. Acts via tRNA-based rather than protein-based catalysis; rejects L-amino acids rather than detecting D-amino acids in the active site. By recycling D-aminoacyl-tRNA to D-amino acids and free tRNA molecules, this enzyme counteracts the toxicity associated with the formation of D-aminoacyl-tRNA entities in vivo and helps enforce protein L-homochirality.</text>
</comment>
<comment type="catalytic activity">
    <reaction evidence="1">
        <text>glycyl-tRNA(Ala) + H2O = tRNA(Ala) + glycine + H(+)</text>
        <dbReference type="Rhea" id="RHEA:53744"/>
        <dbReference type="Rhea" id="RHEA-COMP:9657"/>
        <dbReference type="Rhea" id="RHEA-COMP:13640"/>
        <dbReference type="ChEBI" id="CHEBI:15377"/>
        <dbReference type="ChEBI" id="CHEBI:15378"/>
        <dbReference type="ChEBI" id="CHEBI:57305"/>
        <dbReference type="ChEBI" id="CHEBI:78442"/>
        <dbReference type="ChEBI" id="CHEBI:78522"/>
        <dbReference type="EC" id="3.1.1.96"/>
    </reaction>
</comment>
<comment type="catalytic activity">
    <reaction evidence="1">
        <text>a D-aminoacyl-tRNA + H2O = a tRNA + a D-alpha-amino acid + H(+)</text>
        <dbReference type="Rhea" id="RHEA:13953"/>
        <dbReference type="Rhea" id="RHEA-COMP:10123"/>
        <dbReference type="Rhea" id="RHEA-COMP:10124"/>
        <dbReference type="ChEBI" id="CHEBI:15377"/>
        <dbReference type="ChEBI" id="CHEBI:15378"/>
        <dbReference type="ChEBI" id="CHEBI:59871"/>
        <dbReference type="ChEBI" id="CHEBI:78442"/>
        <dbReference type="ChEBI" id="CHEBI:79333"/>
        <dbReference type="EC" id="3.1.1.96"/>
    </reaction>
</comment>
<comment type="subunit">
    <text evidence="1">Homodimer.</text>
</comment>
<comment type="subcellular location">
    <subcellularLocation>
        <location evidence="1">Cytoplasm</location>
    </subcellularLocation>
</comment>
<comment type="domain">
    <text evidence="1">A Gly-cisPro motif from one monomer fits into the active site of the other monomer to allow specific chiral rejection of L-amino acids.</text>
</comment>
<comment type="similarity">
    <text evidence="1">Belongs to the DTD family.</text>
</comment>
<keyword id="KW-0963">Cytoplasm</keyword>
<keyword id="KW-0378">Hydrolase</keyword>
<keyword id="KW-1185">Reference proteome</keyword>
<keyword id="KW-0694">RNA-binding</keyword>
<keyword id="KW-0820">tRNA-binding</keyword>
<feature type="chain" id="PRO_0000259260" description="D-aminoacyl-tRNA deacylase">
    <location>
        <begin position="1"/>
        <end position="145"/>
    </location>
</feature>
<feature type="short sequence motif" description="Gly-cisPro motif, important for rejection of L-amino acids" evidence="1">
    <location>
        <begin position="137"/>
        <end position="138"/>
    </location>
</feature>
<accession>Q0VM94</accession>
<reference key="1">
    <citation type="journal article" date="2006" name="Nat. Biotechnol.">
        <title>Genome sequence of the ubiquitous hydrocarbon-degrading marine bacterium Alcanivorax borkumensis.</title>
        <authorList>
            <person name="Schneiker S."/>
            <person name="Martins dos Santos V.A.P."/>
            <person name="Bartels D."/>
            <person name="Bekel T."/>
            <person name="Brecht M."/>
            <person name="Buhrmester J."/>
            <person name="Chernikova T.N."/>
            <person name="Denaro R."/>
            <person name="Ferrer M."/>
            <person name="Gertler C."/>
            <person name="Goesmann A."/>
            <person name="Golyshina O.V."/>
            <person name="Kaminski F."/>
            <person name="Khachane A.N."/>
            <person name="Lang S."/>
            <person name="Linke B."/>
            <person name="McHardy A.C."/>
            <person name="Meyer F."/>
            <person name="Nechitaylo T."/>
            <person name="Puehler A."/>
            <person name="Regenhardt D."/>
            <person name="Rupp O."/>
            <person name="Sabirova J.S."/>
            <person name="Selbitschka W."/>
            <person name="Yakimov M.M."/>
            <person name="Timmis K.N."/>
            <person name="Vorhoelter F.-J."/>
            <person name="Weidner S."/>
            <person name="Kaiser O."/>
            <person name="Golyshin P.N."/>
        </authorList>
    </citation>
    <scope>NUCLEOTIDE SEQUENCE [LARGE SCALE GENOMIC DNA]</scope>
    <source>
        <strain>ATCC 700651 / DSM 11573 / NCIMB 13689 / SK2</strain>
    </source>
</reference>